<keyword id="KW-1185">Reference proteome</keyword>
<name>YCGL_SHISS</name>
<proteinExistence type="inferred from homology"/>
<reference key="1">
    <citation type="journal article" date="2005" name="Nucleic Acids Res.">
        <title>Genome dynamics and diversity of Shigella species, the etiologic agents of bacillary dysentery.</title>
        <authorList>
            <person name="Yang F."/>
            <person name="Yang J."/>
            <person name="Zhang X."/>
            <person name="Chen L."/>
            <person name="Jiang Y."/>
            <person name="Yan Y."/>
            <person name="Tang X."/>
            <person name="Wang J."/>
            <person name="Xiong Z."/>
            <person name="Dong J."/>
            <person name="Xue Y."/>
            <person name="Zhu Y."/>
            <person name="Xu X."/>
            <person name="Sun L."/>
            <person name="Chen S."/>
            <person name="Nie H."/>
            <person name="Peng J."/>
            <person name="Xu J."/>
            <person name="Wang Y."/>
            <person name="Yuan Z."/>
            <person name="Wen Y."/>
            <person name="Yao Z."/>
            <person name="Shen Y."/>
            <person name="Qiang B."/>
            <person name="Hou Y."/>
            <person name="Yu J."/>
            <person name="Jin Q."/>
        </authorList>
    </citation>
    <scope>NUCLEOTIDE SEQUENCE [LARGE SCALE GENOMIC DNA]</scope>
    <source>
        <strain>Ss046</strain>
    </source>
</reference>
<sequence>MPKLGILKSKSMFCVIYRSSKRDQTYLYVEKKDDFSRVPEELMKGFGQPQLAMILPLDGRKKLVNADIEKVKLALTEQGYYLQLPPPPEDLLKQHLSVMGQKTDDTNK</sequence>
<dbReference type="EMBL" id="CP000038">
    <property type="protein sequence ID" value="AAZ87892.1"/>
    <property type="molecule type" value="Genomic_DNA"/>
</dbReference>
<dbReference type="SMR" id="Q3Z2X0"/>
<dbReference type="KEGG" id="ssn:SSON_1168"/>
<dbReference type="HOGENOM" id="CLU_155118_1_0_6"/>
<dbReference type="Proteomes" id="UP000002529">
    <property type="component" value="Chromosome"/>
</dbReference>
<dbReference type="Gene3D" id="3.10.510.20">
    <property type="entry name" value="YcgL domain"/>
    <property type="match status" value="1"/>
</dbReference>
<dbReference type="HAMAP" id="MF_01866">
    <property type="entry name" value="UPF0745"/>
    <property type="match status" value="1"/>
</dbReference>
<dbReference type="InterPro" id="IPR038068">
    <property type="entry name" value="YcgL-like_sf"/>
</dbReference>
<dbReference type="InterPro" id="IPR027354">
    <property type="entry name" value="YcgL_dom"/>
</dbReference>
<dbReference type="PANTHER" id="PTHR38109">
    <property type="entry name" value="PROTEIN YCGL"/>
    <property type="match status" value="1"/>
</dbReference>
<dbReference type="PANTHER" id="PTHR38109:SF1">
    <property type="entry name" value="PROTEIN YCGL"/>
    <property type="match status" value="1"/>
</dbReference>
<dbReference type="Pfam" id="PF05166">
    <property type="entry name" value="YcgL"/>
    <property type="match status" value="1"/>
</dbReference>
<dbReference type="SUPFAM" id="SSF160191">
    <property type="entry name" value="YcgL-like"/>
    <property type="match status" value="1"/>
</dbReference>
<dbReference type="PROSITE" id="PS51648">
    <property type="entry name" value="YCGL"/>
    <property type="match status" value="1"/>
</dbReference>
<organism>
    <name type="scientific">Shigella sonnei (strain Ss046)</name>
    <dbReference type="NCBI Taxonomy" id="300269"/>
    <lineage>
        <taxon>Bacteria</taxon>
        <taxon>Pseudomonadati</taxon>
        <taxon>Pseudomonadota</taxon>
        <taxon>Gammaproteobacteria</taxon>
        <taxon>Enterobacterales</taxon>
        <taxon>Enterobacteriaceae</taxon>
        <taxon>Shigella</taxon>
    </lineage>
</organism>
<protein>
    <recommendedName>
        <fullName evidence="1">Protein YcgL</fullName>
    </recommendedName>
</protein>
<accession>Q3Z2X0</accession>
<gene>
    <name evidence="1" type="primary">ycgL</name>
    <name type="ordered locus">SSON_1168</name>
</gene>
<evidence type="ECO:0000255" key="1">
    <source>
        <dbReference type="HAMAP-Rule" id="MF_01866"/>
    </source>
</evidence>
<feature type="chain" id="PRO_0000375387" description="Protein YcgL">
    <location>
        <begin position="1"/>
        <end position="108"/>
    </location>
</feature>
<feature type="domain" description="YcgL" evidence="1">
    <location>
        <begin position="12"/>
        <end position="96"/>
    </location>
</feature>